<gene>
    <name evidence="1" type="primary">rplL</name>
    <name type="ordered locus">NWMN_0502</name>
</gene>
<evidence type="ECO:0000255" key="1">
    <source>
        <dbReference type="HAMAP-Rule" id="MF_00368"/>
    </source>
</evidence>
<evidence type="ECO:0000305" key="2"/>
<reference key="1">
    <citation type="journal article" date="2008" name="J. Bacteriol.">
        <title>Genome sequence of Staphylococcus aureus strain Newman and comparative analysis of staphylococcal genomes: polymorphism and evolution of two major pathogenicity islands.</title>
        <authorList>
            <person name="Baba T."/>
            <person name="Bae T."/>
            <person name="Schneewind O."/>
            <person name="Takeuchi F."/>
            <person name="Hiramatsu K."/>
        </authorList>
    </citation>
    <scope>NUCLEOTIDE SEQUENCE [LARGE SCALE GENOMIC DNA]</scope>
    <source>
        <strain>Newman</strain>
    </source>
</reference>
<keyword id="KW-0687">Ribonucleoprotein</keyword>
<keyword id="KW-0689">Ribosomal protein</keyword>
<feature type="chain" id="PRO_1000072119" description="Large ribosomal subunit protein bL12">
    <location>
        <begin position="1"/>
        <end position="122"/>
    </location>
</feature>
<name>RL7_STAAE</name>
<accession>A6QEJ2</accession>
<proteinExistence type="inferred from homology"/>
<protein>
    <recommendedName>
        <fullName evidence="1">Large ribosomal subunit protein bL12</fullName>
    </recommendedName>
    <alternativeName>
        <fullName evidence="2">50S ribosomal protein L7/L12</fullName>
    </alternativeName>
</protein>
<organism>
    <name type="scientific">Staphylococcus aureus (strain Newman)</name>
    <dbReference type="NCBI Taxonomy" id="426430"/>
    <lineage>
        <taxon>Bacteria</taxon>
        <taxon>Bacillati</taxon>
        <taxon>Bacillota</taxon>
        <taxon>Bacilli</taxon>
        <taxon>Bacillales</taxon>
        <taxon>Staphylococcaceae</taxon>
        <taxon>Staphylococcus</taxon>
    </lineage>
</organism>
<dbReference type="EMBL" id="AP009351">
    <property type="protein sequence ID" value="BAF66774.1"/>
    <property type="molecule type" value="Genomic_DNA"/>
</dbReference>
<dbReference type="RefSeq" id="WP_001273585.1">
    <property type="nucleotide sequence ID" value="NZ_JBBIAE010000002.1"/>
</dbReference>
<dbReference type="SMR" id="A6QEJ2"/>
<dbReference type="KEGG" id="sae:NWMN_0502"/>
<dbReference type="HOGENOM" id="CLU_086499_3_2_9"/>
<dbReference type="Proteomes" id="UP000006386">
    <property type="component" value="Chromosome"/>
</dbReference>
<dbReference type="GO" id="GO:0022625">
    <property type="term" value="C:cytosolic large ribosomal subunit"/>
    <property type="evidence" value="ECO:0007669"/>
    <property type="project" value="TreeGrafter"/>
</dbReference>
<dbReference type="GO" id="GO:0003729">
    <property type="term" value="F:mRNA binding"/>
    <property type="evidence" value="ECO:0007669"/>
    <property type="project" value="TreeGrafter"/>
</dbReference>
<dbReference type="GO" id="GO:0003735">
    <property type="term" value="F:structural constituent of ribosome"/>
    <property type="evidence" value="ECO:0007669"/>
    <property type="project" value="InterPro"/>
</dbReference>
<dbReference type="GO" id="GO:0006412">
    <property type="term" value="P:translation"/>
    <property type="evidence" value="ECO:0007669"/>
    <property type="project" value="UniProtKB-UniRule"/>
</dbReference>
<dbReference type="CDD" id="cd00387">
    <property type="entry name" value="Ribosomal_L7_L12"/>
    <property type="match status" value="1"/>
</dbReference>
<dbReference type="FunFam" id="1.20.5.710:FF:000002">
    <property type="entry name" value="50S ribosomal protein L7/L12"/>
    <property type="match status" value="1"/>
</dbReference>
<dbReference type="FunFam" id="3.30.1390.10:FF:000001">
    <property type="entry name" value="50S ribosomal protein L7/L12"/>
    <property type="match status" value="1"/>
</dbReference>
<dbReference type="Gene3D" id="3.30.1390.10">
    <property type="match status" value="1"/>
</dbReference>
<dbReference type="Gene3D" id="1.20.5.710">
    <property type="entry name" value="Single helix bin"/>
    <property type="match status" value="1"/>
</dbReference>
<dbReference type="HAMAP" id="MF_00368">
    <property type="entry name" value="Ribosomal_bL12"/>
    <property type="match status" value="1"/>
</dbReference>
<dbReference type="InterPro" id="IPR000206">
    <property type="entry name" value="Ribosomal_bL12"/>
</dbReference>
<dbReference type="InterPro" id="IPR013823">
    <property type="entry name" value="Ribosomal_bL12_C"/>
</dbReference>
<dbReference type="InterPro" id="IPR014719">
    <property type="entry name" value="Ribosomal_bL12_C/ClpS-like"/>
</dbReference>
<dbReference type="InterPro" id="IPR008932">
    <property type="entry name" value="Ribosomal_bL12_oligo"/>
</dbReference>
<dbReference type="InterPro" id="IPR036235">
    <property type="entry name" value="Ribosomal_bL12_oligo_N_sf"/>
</dbReference>
<dbReference type="NCBIfam" id="TIGR00855">
    <property type="entry name" value="L12"/>
    <property type="match status" value="1"/>
</dbReference>
<dbReference type="PANTHER" id="PTHR45987">
    <property type="entry name" value="39S RIBOSOMAL PROTEIN L12"/>
    <property type="match status" value="1"/>
</dbReference>
<dbReference type="PANTHER" id="PTHR45987:SF4">
    <property type="entry name" value="LARGE RIBOSOMAL SUBUNIT PROTEIN BL12M"/>
    <property type="match status" value="1"/>
</dbReference>
<dbReference type="Pfam" id="PF00542">
    <property type="entry name" value="Ribosomal_L12"/>
    <property type="match status" value="1"/>
</dbReference>
<dbReference type="Pfam" id="PF16320">
    <property type="entry name" value="Ribosomal_L12_N"/>
    <property type="match status" value="1"/>
</dbReference>
<dbReference type="SUPFAM" id="SSF54736">
    <property type="entry name" value="ClpS-like"/>
    <property type="match status" value="1"/>
</dbReference>
<dbReference type="SUPFAM" id="SSF48300">
    <property type="entry name" value="Ribosomal protein L7/12, oligomerisation (N-terminal) domain"/>
    <property type="match status" value="1"/>
</dbReference>
<sequence>MANHEQIIEAIKEMSVLELNDLVKAIEEEFGVTAAAPVAVAGAAGGADAAAEKTEFDVELTSAGSSKIKVVKAVKEATGLGLKDAKELVDGAPKVIKEALPKEEAEKLKEQLEEVGATVEIK</sequence>
<comment type="function">
    <text evidence="1">Forms part of the ribosomal stalk which helps the ribosome interact with GTP-bound translation factors. Is thus essential for accurate translation.</text>
</comment>
<comment type="subunit">
    <text evidence="1">Homodimer. Part of the ribosomal stalk of the 50S ribosomal subunit. Forms a multimeric L10(L12)X complex, where L10 forms an elongated spine to which 2 to 4 L12 dimers bind in a sequential fashion. Binds GTP-bound translation factors.</text>
</comment>
<comment type="similarity">
    <text evidence="1">Belongs to the bacterial ribosomal protein bL12 family.</text>
</comment>